<proteinExistence type="inferred from homology"/>
<protein>
    <recommendedName>
        <fullName evidence="1">Thymidylate kinase</fullName>
        <ecNumber evidence="1">2.7.4.9</ecNumber>
    </recommendedName>
    <alternativeName>
        <fullName evidence="1">dTMP kinase</fullName>
    </alternativeName>
</protein>
<dbReference type="EC" id="2.7.4.9" evidence="1"/>
<dbReference type="EMBL" id="CP000117">
    <property type="protein sequence ID" value="ABA21584.1"/>
    <property type="molecule type" value="Genomic_DNA"/>
</dbReference>
<dbReference type="SMR" id="Q3MBQ2"/>
<dbReference type="STRING" id="240292.Ava_1962"/>
<dbReference type="KEGG" id="ava:Ava_1962"/>
<dbReference type="eggNOG" id="COG0125">
    <property type="taxonomic scope" value="Bacteria"/>
</dbReference>
<dbReference type="HOGENOM" id="CLU_049131_0_0_3"/>
<dbReference type="Proteomes" id="UP000002533">
    <property type="component" value="Chromosome"/>
</dbReference>
<dbReference type="GO" id="GO:0005829">
    <property type="term" value="C:cytosol"/>
    <property type="evidence" value="ECO:0007669"/>
    <property type="project" value="TreeGrafter"/>
</dbReference>
<dbReference type="GO" id="GO:0005524">
    <property type="term" value="F:ATP binding"/>
    <property type="evidence" value="ECO:0007669"/>
    <property type="project" value="UniProtKB-UniRule"/>
</dbReference>
<dbReference type="GO" id="GO:0004798">
    <property type="term" value="F:dTMP kinase activity"/>
    <property type="evidence" value="ECO:0007669"/>
    <property type="project" value="UniProtKB-UniRule"/>
</dbReference>
<dbReference type="GO" id="GO:0006233">
    <property type="term" value="P:dTDP biosynthetic process"/>
    <property type="evidence" value="ECO:0007669"/>
    <property type="project" value="InterPro"/>
</dbReference>
<dbReference type="GO" id="GO:0006235">
    <property type="term" value="P:dTTP biosynthetic process"/>
    <property type="evidence" value="ECO:0007669"/>
    <property type="project" value="UniProtKB-UniRule"/>
</dbReference>
<dbReference type="GO" id="GO:0006227">
    <property type="term" value="P:dUDP biosynthetic process"/>
    <property type="evidence" value="ECO:0007669"/>
    <property type="project" value="TreeGrafter"/>
</dbReference>
<dbReference type="CDD" id="cd01672">
    <property type="entry name" value="TMPK"/>
    <property type="match status" value="1"/>
</dbReference>
<dbReference type="FunFam" id="3.40.50.300:FF:000225">
    <property type="entry name" value="Thymidylate kinase"/>
    <property type="match status" value="1"/>
</dbReference>
<dbReference type="Gene3D" id="3.40.50.300">
    <property type="entry name" value="P-loop containing nucleotide triphosphate hydrolases"/>
    <property type="match status" value="1"/>
</dbReference>
<dbReference type="HAMAP" id="MF_00165">
    <property type="entry name" value="Thymidylate_kinase"/>
    <property type="match status" value="1"/>
</dbReference>
<dbReference type="InterPro" id="IPR027417">
    <property type="entry name" value="P-loop_NTPase"/>
</dbReference>
<dbReference type="InterPro" id="IPR039430">
    <property type="entry name" value="Thymidylate_kin-like_dom"/>
</dbReference>
<dbReference type="InterPro" id="IPR018095">
    <property type="entry name" value="Thymidylate_kin_CS"/>
</dbReference>
<dbReference type="InterPro" id="IPR018094">
    <property type="entry name" value="Thymidylate_kinase"/>
</dbReference>
<dbReference type="NCBIfam" id="TIGR00041">
    <property type="entry name" value="DTMP_kinase"/>
    <property type="match status" value="1"/>
</dbReference>
<dbReference type="PANTHER" id="PTHR10344">
    <property type="entry name" value="THYMIDYLATE KINASE"/>
    <property type="match status" value="1"/>
</dbReference>
<dbReference type="PANTHER" id="PTHR10344:SF4">
    <property type="entry name" value="UMP-CMP KINASE 2, MITOCHONDRIAL"/>
    <property type="match status" value="1"/>
</dbReference>
<dbReference type="Pfam" id="PF02223">
    <property type="entry name" value="Thymidylate_kin"/>
    <property type="match status" value="1"/>
</dbReference>
<dbReference type="SUPFAM" id="SSF52540">
    <property type="entry name" value="P-loop containing nucleoside triphosphate hydrolases"/>
    <property type="match status" value="1"/>
</dbReference>
<dbReference type="PROSITE" id="PS01331">
    <property type="entry name" value="THYMIDYLATE_KINASE"/>
    <property type="match status" value="1"/>
</dbReference>
<feature type="chain" id="PRO_1000023144" description="Thymidylate kinase">
    <location>
        <begin position="1"/>
        <end position="211"/>
    </location>
</feature>
<feature type="binding site" evidence="1">
    <location>
        <begin position="10"/>
        <end position="17"/>
    </location>
    <ligand>
        <name>ATP</name>
        <dbReference type="ChEBI" id="CHEBI:30616"/>
    </ligand>
</feature>
<name>KTHY_TRIV2</name>
<organism>
    <name type="scientific">Trichormus variabilis (strain ATCC 29413 / PCC 7937)</name>
    <name type="common">Anabaena variabilis</name>
    <dbReference type="NCBI Taxonomy" id="240292"/>
    <lineage>
        <taxon>Bacteria</taxon>
        <taxon>Bacillati</taxon>
        <taxon>Cyanobacteriota</taxon>
        <taxon>Cyanophyceae</taxon>
        <taxon>Nostocales</taxon>
        <taxon>Nostocaceae</taxon>
        <taxon>Trichormus</taxon>
    </lineage>
</organism>
<gene>
    <name evidence="1" type="primary">tmk</name>
    <name type="ordered locus">Ava_1962</name>
</gene>
<sequence length="211" mass="23565">MGGRFIVFEGVEGCGKTSQMQLCAEWLQNLGISVILTREPGGTELGVDLRRLLLQKAEDKPIAEVTELLLYAADRAQHVAQELKPKLAQGKYILCDRYVDSTIAYQGYGRNLDMNLIHQLNDIATGGLTSDITIWLDVDVEVGLARKRGENVGLDRIEQETIAFHRRVQQGYANLAASSPSRIIRVDGQLSKETVHKTIQEILSPHLKEWL</sequence>
<accession>Q3MBQ2</accession>
<reference key="1">
    <citation type="journal article" date="2014" name="Stand. Genomic Sci.">
        <title>Complete genome sequence of Anabaena variabilis ATCC 29413.</title>
        <authorList>
            <person name="Thiel T."/>
            <person name="Pratte B.S."/>
            <person name="Zhong J."/>
            <person name="Goodwin L."/>
            <person name="Copeland A."/>
            <person name="Lucas S."/>
            <person name="Han C."/>
            <person name="Pitluck S."/>
            <person name="Land M.L."/>
            <person name="Kyrpides N.C."/>
            <person name="Woyke T."/>
        </authorList>
    </citation>
    <scope>NUCLEOTIDE SEQUENCE [LARGE SCALE GENOMIC DNA]</scope>
    <source>
        <strain>ATCC 29413 / PCC 7937</strain>
    </source>
</reference>
<evidence type="ECO:0000255" key="1">
    <source>
        <dbReference type="HAMAP-Rule" id="MF_00165"/>
    </source>
</evidence>
<comment type="function">
    <text evidence="1">Phosphorylation of dTMP to form dTDP in both de novo and salvage pathways of dTTP synthesis.</text>
</comment>
<comment type="catalytic activity">
    <reaction evidence="1">
        <text>dTMP + ATP = dTDP + ADP</text>
        <dbReference type="Rhea" id="RHEA:13517"/>
        <dbReference type="ChEBI" id="CHEBI:30616"/>
        <dbReference type="ChEBI" id="CHEBI:58369"/>
        <dbReference type="ChEBI" id="CHEBI:63528"/>
        <dbReference type="ChEBI" id="CHEBI:456216"/>
        <dbReference type="EC" id="2.7.4.9"/>
    </reaction>
</comment>
<comment type="similarity">
    <text evidence="1">Belongs to the thymidylate kinase family.</text>
</comment>
<keyword id="KW-0067">ATP-binding</keyword>
<keyword id="KW-0418">Kinase</keyword>
<keyword id="KW-0545">Nucleotide biosynthesis</keyword>
<keyword id="KW-0547">Nucleotide-binding</keyword>
<keyword id="KW-0808">Transferase</keyword>